<feature type="chain" id="PRO_0000076946" description="Galectin-9">
    <location>
        <begin position="1"/>
        <end position="355"/>
    </location>
</feature>
<feature type="domain" description="Galectin 1" evidence="4">
    <location>
        <begin position="17"/>
        <end position="148"/>
    </location>
</feature>
<feature type="domain" description="Galectin 2" evidence="4">
    <location>
        <begin position="227"/>
        <end position="355"/>
    </location>
</feature>
<feature type="binding site">
    <location>
        <position position="48"/>
    </location>
    <ligand>
        <name>a beta-D-galactoside</name>
        <dbReference type="ChEBI" id="CHEBI:28034"/>
        <label>1</label>
    </ligand>
</feature>
<feature type="binding site">
    <location>
        <position position="61"/>
    </location>
    <ligand>
        <name>a beta-D-galactoside</name>
        <dbReference type="ChEBI" id="CHEBI:28034"/>
        <label>1</label>
    </ligand>
</feature>
<feature type="binding site">
    <location>
        <position position="65"/>
    </location>
    <ligand>
        <name>a beta-D-galactoside</name>
        <dbReference type="ChEBI" id="CHEBI:28034"/>
        <label>1</label>
    </ligand>
</feature>
<feature type="binding site">
    <location>
        <position position="75"/>
    </location>
    <ligand>
        <name>a beta-D-galactoside</name>
        <dbReference type="ChEBI" id="CHEBI:28034"/>
        <label>1</label>
    </ligand>
</feature>
<feature type="binding site">
    <location>
        <begin position="82"/>
        <end position="88"/>
    </location>
    <ligand>
        <name>a beta-D-galactoside</name>
        <dbReference type="ChEBI" id="CHEBI:28034"/>
        <label>1</label>
    </ligand>
</feature>
<feature type="binding site">
    <location>
        <position position="267"/>
    </location>
    <ligand>
        <name>a beta-D-galactoside</name>
        <dbReference type="ChEBI" id="CHEBI:28034"/>
        <label>2</label>
    </ligand>
</feature>
<feature type="binding site">
    <location>
        <position position="271"/>
    </location>
    <ligand>
        <name>a beta-D-galactoside</name>
        <dbReference type="ChEBI" id="CHEBI:28034"/>
        <label>2</label>
    </ligand>
</feature>
<feature type="binding site" evidence="1">
    <location>
        <position position="281"/>
    </location>
    <ligand>
        <name>a beta-D-galactoside</name>
        <dbReference type="ChEBI" id="CHEBI:28034"/>
        <label>2</label>
    </ligand>
</feature>
<feature type="binding site" evidence="1">
    <location>
        <begin position="287"/>
        <end position="293"/>
    </location>
    <ligand>
        <name>a beta-D-galactoside</name>
        <dbReference type="ChEBI" id="CHEBI:28034"/>
        <label>2</label>
    </ligand>
</feature>
<feature type="splice variant" id="VSP_003096" description="In isoform 2, isoform 3, isoform 4 and isoform 5." evidence="14 21 24 25 26 27">
    <location>
        <begin position="149"/>
        <end position="180"/>
    </location>
</feature>
<feature type="splice variant" id="VSP_057842" description="In isoform 3, isoform 5 and isoform 6." evidence="11 14">
    <location>
        <begin position="181"/>
        <end position="192"/>
    </location>
</feature>
<feature type="splice variant" id="VSP_057843" description="In isoform 4 and isoform 5." evidence="14">
    <original>FHINLCSGNHIAFHLNPRFDENAVVRNTQIDNSWGSEERSLPRKMPFVRGQSFSVWILCEAHCLKVAVDGQHLFEYYHRLRNLPTINRLEVGGDIQLTHVQT</original>
    <variation>CGSCVKLTASRWPWMVSTCLNTTIA</variation>
    <location>
        <begin position="254"/>
        <end position="355"/>
    </location>
</feature>
<feature type="sequence variant" id="VAR_020453" description="In dbSNP:rs3751093." evidence="19 20">
    <original>G</original>
    <variation>S</variation>
    <location>
        <position position="5"/>
    </location>
</feature>
<feature type="sequence conflict" description="In Ref. 6; CAB93851." evidence="28" ref="6">
    <original>N</original>
    <variation>D</variation>
    <location>
        <position position="48"/>
    </location>
</feature>
<feature type="sequence conflict" description="In Ref. 6; CAB93851." evidence="28" ref="6">
    <original>NGS</original>
    <variation>KGR</variation>
    <location>
        <begin position="79"/>
        <end position="81"/>
    </location>
</feature>
<feature type="sequence conflict" description="In Ref. 1; CAA88922." evidence="28" ref="1">
    <original>K</original>
    <variation>R</variation>
    <location>
        <position position="88"/>
    </location>
</feature>
<feature type="sequence conflict" description="In Ref. 6; CAB93851." evidence="28" ref="6">
    <original>T</original>
    <variation>M</variation>
    <location>
        <position position="89"/>
    </location>
</feature>
<feature type="sequence conflict" description="In Ref. 7; BAD96952." evidence="28" ref="7">
    <original>F</original>
    <variation>S</variation>
    <location>
        <position position="93"/>
    </location>
</feature>
<feature type="sequence conflict" description="In Ref. 1; CAA88922." evidence="28" ref="1">
    <original>S</original>
    <variation>F</variation>
    <location>
        <position position="135"/>
    </location>
</feature>
<feature type="sequence conflict" description="In Ref. 1; CAA88922." evidence="28" ref="1">
    <original>P</original>
    <variation>L</variation>
    <location>
        <position position="270"/>
    </location>
</feature>
<feature type="sequence conflict" description="In Ref. 1; CAA88922." evidence="28" ref="1">
    <original>E</original>
    <variation>G</variation>
    <location>
        <position position="313"/>
    </location>
</feature>
<feature type="sequence conflict" description="In Ref. 6; CAB93851." evidence="28" ref="6">
    <original>L</original>
    <variation>V</variation>
    <location>
        <position position="326"/>
    </location>
</feature>
<feature type="sequence conflict" description="In Ref. 6; CAB93851." evidence="28" ref="6">
    <original>R</original>
    <variation>K</variation>
    <location>
        <position position="341"/>
    </location>
</feature>
<feature type="strand" evidence="31">
    <location>
        <begin position="5"/>
        <end position="7"/>
    </location>
</feature>
<feature type="strand" evidence="31">
    <location>
        <begin position="10"/>
        <end position="12"/>
    </location>
</feature>
<feature type="strand" evidence="31">
    <location>
        <begin position="15"/>
        <end position="20"/>
    </location>
</feature>
<feature type="strand" evidence="31">
    <location>
        <begin position="30"/>
        <end position="37"/>
    </location>
</feature>
<feature type="strand" evidence="31">
    <location>
        <begin position="39"/>
        <end position="41"/>
    </location>
</feature>
<feature type="strand" evidence="31">
    <location>
        <begin position="43"/>
        <end position="56"/>
    </location>
</feature>
<feature type="strand" evidence="31">
    <location>
        <begin position="58"/>
        <end position="65"/>
    </location>
</feature>
<feature type="strand" evidence="31">
    <location>
        <begin position="71"/>
        <end position="78"/>
    </location>
</feature>
<feature type="strand" evidence="31">
    <location>
        <begin position="86"/>
        <end position="89"/>
    </location>
</feature>
<feature type="strand" evidence="31">
    <location>
        <begin position="98"/>
        <end position="105"/>
    </location>
</feature>
<feature type="strand" evidence="31">
    <location>
        <begin position="107"/>
        <end position="114"/>
    </location>
</feature>
<feature type="strand" evidence="31">
    <location>
        <begin position="117"/>
        <end position="123"/>
    </location>
</feature>
<feature type="helix" evidence="31">
    <location>
        <begin position="128"/>
        <end position="130"/>
    </location>
</feature>
<feature type="strand" evidence="31">
    <location>
        <begin position="133"/>
        <end position="146"/>
    </location>
</feature>
<feature type="strand" evidence="32">
    <location>
        <begin position="225"/>
        <end position="230"/>
    </location>
</feature>
<feature type="strand" evidence="32">
    <location>
        <begin position="240"/>
        <end position="247"/>
    </location>
</feature>
<feature type="strand" evidence="32">
    <location>
        <begin position="253"/>
        <end position="260"/>
    </location>
</feature>
<feature type="strand" evidence="32">
    <location>
        <begin position="263"/>
        <end position="271"/>
    </location>
</feature>
<feature type="turn" evidence="32">
    <location>
        <begin position="272"/>
        <end position="275"/>
    </location>
</feature>
<feature type="strand" evidence="32">
    <location>
        <begin position="276"/>
        <end position="283"/>
    </location>
</feature>
<feature type="strand" evidence="32">
    <location>
        <begin position="295"/>
        <end position="297"/>
    </location>
</feature>
<feature type="strand" evidence="32">
    <location>
        <begin position="305"/>
        <end position="312"/>
    </location>
</feature>
<feature type="strand" evidence="32">
    <location>
        <begin position="314"/>
        <end position="321"/>
    </location>
</feature>
<feature type="strand" evidence="32">
    <location>
        <begin position="324"/>
        <end position="330"/>
    </location>
</feature>
<feature type="helix" evidence="32">
    <location>
        <begin position="336"/>
        <end position="338"/>
    </location>
</feature>
<feature type="strand" evidence="32">
    <location>
        <begin position="341"/>
        <end position="354"/>
    </location>
</feature>
<organism>
    <name type="scientific">Homo sapiens</name>
    <name type="common">Human</name>
    <dbReference type="NCBI Taxonomy" id="9606"/>
    <lineage>
        <taxon>Eukaryota</taxon>
        <taxon>Metazoa</taxon>
        <taxon>Chordata</taxon>
        <taxon>Craniata</taxon>
        <taxon>Vertebrata</taxon>
        <taxon>Euteleostomi</taxon>
        <taxon>Mammalia</taxon>
        <taxon>Eutheria</taxon>
        <taxon>Euarchontoglires</taxon>
        <taxon>Primates</taxon>
        <taxon>Haplorrhini</taxon>
        <taxon>Catarrhini</taxon>
        <taxon>Hominidae</taxon>
        <taxon>Homo</taxon>
    </lineage>
</organism>
<keyword id="KW-0002">3D-structure</keyword>
<keyword id="KW-0025">Alternative splicing</keyword>
<keyword id="KW-0145">Chemotaxis</keyword>
<keyword id="KW-0963">Cytoplasm</keyword>
<keyword id="KW-0391">Immunity</keyword>
<keyword id="KW-0430">Lectin</keyword>
<keyword id="KW-0539">Nucleus</keyword>
<keyword id="KW-1267">Proteomics identification</keyword>
<keyword id="KW-1185">Reference proteome</keyword>
<keyword id="KW-0677">Repeat</keyword>
<keyword id="KW-0964">Secreted</keyword>
<reference key="1">
    <citation type="journal article" date="1997" name="J. Biol. Chem.">
        <title>Molecular definition of a novel human galectin which is immunogenic in patients with Hodgkin's disease.</title>
        <authorList>
            <person name="Tuereci O."/>
            <person name="Schmitt H."/>
            <person name="Fadle N."/>
            <person name="Pfreundschuh M."/>
            <person name="Sahin U."/>
        </authorList>
    </citation>
    <scope>NUCLEOTIDE SEQUENCE [MRNA] (ISOFORM 2)</scope>
    <source>
        <tissue>Spleen</tissue>
    </source>
</reference>
<reference key="2">
    <citation type="submission" date="1997-09" db="EMBL/GenBank/DDBJ databases">
        <title>Human galectin-9 isoform full-length cDNA from gastric adenocarcinoma.</title>
        <authorList>
            <person name="Kato S."/>
        </authorList>
    </citation>
    <scope>NUCLEOTIDE SEQUENCE [MRNA] (ISOFORM 1)</scope>
    <source>
        <tissue>Gastric carcinoma</tissue>
    </source>
</reference>
<reference key="3">
    <citation type="journal article" date="1998" name="J. Biol. Chem.">
        <title>Human ecalectin, a variant of human galectin-9, is a novel eosinophil chemoattractant produced by T lymphocytes.</title>
        <authorList>
            <person name="Matsumoto R."/>
            <person name="Matsumoto H."/>
            <person name="Seki M."/>
            <person name="Hata M."/>
            <person name="Asano Y."/>
            <person name="Kanegasaki S."/>
            <person name="Stevens R.L."/>
            <person name="Hirashima M."/>
        </authorList>
    </citation>
    <scope>NUCLEOTIDE SEQUENCE [MRNA] (ISOFORM 2)</scope>
    <scope>FUNCTION</scope>
    <scope>VARIANT SER-5</scope>
</reference>
<reference key="4">
    <citation type="submission" date="1997-10" db="EMBL/GenBank/DDBJ databases">
        <title>Cloning and expression of human urate transporter mRNA.</title>
        <authorList>
            <person name="Nakajima H."/>
            <person name="Shichiri M."/>
            <person name="Hamaguchi T."/>
        </authorList>
    </citation>
    <scope>NUCLEOTIDE SEQUENCE [MRNA] (ISOFORMS 1 AND 2)</scope>
    <source>
        <tissue>Kidney</tissue>
        <tissue>Stomach</tissue>
    </source>
</reference>
<reference key="5">
    <citation type="submission" date="2000-03" db="EMBL/GenBank/DDBJ databases">
        <title>Homo sapiens galectin-9 (LGALS9) / ecalectin gene.</title>
        <authorList>
            <person name="Akiyama S."/>
        </authorList>
    </citation>
    <scope>NUCLEOTIDE SEQUENCE [GENOMIC DNA]</scope>
    <scope>ALTERNATIVE SPLICING (ISOFORMS 1 AND 3)</scope>
</reference>
<reference key="6">
    <citation type="submission" date="2000-03" db="EMBL/GenBank/DDBJ databases">
        <title>Genomic organization of the human galectin-9 gene.</title>
        <authorList>
            <person name="Graessler J."/>
            <person name="Spitzenberger F."/>
            <person name="Schroeder H.E."/>
        </authorList>
    </citation>
    <scope>NUCLEOTIDE SEQUENCE [GENOMIC DNA]</scope>
</reference>
<reference key="7">
    <citation type="submission" date="2005-04" db="EMBL/GenBank/DDBJ databases">
        <authorList>
            <person name="Suzuki Y."/>
            <person name="Sugano S."/>
            <person name="Totoki Y."/>
            <person name="Toyoda A."/>
            <person name="Takeda T."/>
            <person name="Sakaki Y."/>
            <person name="Tanaka A."/>
            <person name="Yokoyama S."/>
        </authorList>
    </citation>
    <scope>NUCLEOTIDE SEQUENCE [LARGE SCALE MRNA] (ISOFORM 2)</scope>
    <scope>VARIANT SER-5</scope>
    <source>
        <tissue>Gastric mucosa</tissue>
    </source>
</reference>
<reference key="8">
    <citation type="journal article" date="2006" name="Nature">
        <title>DNA sequence of human chromosome 17 and analysis of rearrangement in the human lineage.</title>
        <authorList>
            <person name="Zody M.C."/>
            <person name="Garber M."/>
            <person name="Adams D.J."/>
            <person name="Sharpe T."/>
            <person name="Harrow J."/>
            <person name="Lupski J.R."/>
            <person name="Nicholson C."/>
            <person name="Searle S.M."/>
            <person name="Wilming L."/>
            <person name="Young S.K."/>
            <person name="Abouelleil A."/>
            <person name="Allen N.R."/>
            <person name="Bi W."/>
            <person name="Bloom T."/>
            <person name="Borowsky M.L."/>
            <person name="Bugalter B.E."/>
            <person name="Butler J."/>
            <person name="Chang J.L."/>
            <person name="Chen C.-K."/>
            <person name="Cook A."/>
            <person name="Corum B."/>
            <person name="Cuomo C.A."/>
            <person name="de Jong P.J."/>
            <person name="DeCaprio D."/>
            <person name="Dewar K."/>
            <person name="FitzGerald M."/>
            <person name="Gilbert J."/>
            <person name="Gibson R."/>
            <person name="Gnerre S."/>
            <person name="Goldstein S."/>
            <person name="Grafham D.V."/>
            <person name="Grocock R."/>
            <person name="Hafez N."/>
            <person name="Hagopian D.S."/>
            <person name="Hart E."/>
            <person name="Norman C.H."/>
            <person name="Humphray S."/>
            <person name="Jaffe D.B."/>
            <person name="Jones M."/>
            <person name="Kamal M."/>
            <person name="Khodiyar V.K."/>
            <person name="LaButti K."/>
            <person name="Laird G."/>
            <person name="Lehoczky J."/>
            <person name="Liu X."/>
            <person name="Lokyitsang T."/>
            <person name="Loveland J."/>
            <person name="Lui A."/>
            <person name="Macdonald P."/>
            <person name="Major J.E."/>
            <person name="Matthews L."/>
            <person name="Mauceli E."/>
            <person name="McCarroll S.A."/>
            <person name="Mihalev A.H."/>
            <person name="Mudge J."/>
            <person name="Nguyen C."/>
            <person name="Nicol R."/>
            <person name="O'Leary S.B."/>
            <person name="Osoegawa K."/>
            <person name="Schwartz D.C."/>
            <person name="Shaw-Smith C."/>
            <person name="Stankiewicz P."/>
            <person name="Steward C."/>
            <person name="Swarbreck D."/>
            <person name="Venkataraman V."/>
            <person name="Whittaker C.A."/>
            <person name="Yang X."/>
            <person name="Zimmer A.R."/>
            <person name="Bradley A."/>
            <person name="Hubbard T."/>
            <person name="Birren B.W."/>
            <person name="Rogers J."/>
            <person name="Lander E.S."/>
            <person name="Nusbaum C."/>
        </authorList>
    </citation>
    <scope>NUCLEOTIDE SEQUENCE [LARGE SCALE GENOMIC DNA]</scope>
</reference>
<reference key="9">
    <citation type="submission" date="2005-07" db="EMBL/GenBank/DDBJ databases">
        <authorList>
            <person name="Mural R.J."/>
            <person name="Istrail S."/>
            <person name="Sutton G.G."/>
            <person name="Florea L."/>
            <person name="Halpern A.L."/>
            <person name="Mobarry C.M."/>
            <person name="Lippert R."/>
            <person name="Walenz B."/>
            <person name="Shatkay H."/>
            <person name="Dew I."/>
            <person name="Miller J.R."/>
            <person name="Flanigan M.J."/>
            <person name="Edwards N.J."/>
            <person name="Bolanos R."/>
            <person name="Fasulo D."/>
            <person name="Halldorsson B.V."/>
            <person name="Hannenhalli S."/>
            <person name="Turner R."/>
            <person name="Yooseph S."/>
            <person name="Lu F."/>
            <person name="Nusskern D.R."/>
            <person name="Shue B.C."/>
            <person name="Zheng X.H."/>
            <person name="Zhong F."/>
            <person name="Delcher A.L."/>
            <person name="Huson D.H."/>
            <person name="Kravitz S.A."/>
            <person name="Mouchard L."/>
            <person name="Reinert K."/>
            <person name="Remington K.A."/>
            <person name="Clark A.G."/>
            <person name="Waterman M.S."/>
            <person name="Eichler E.E."/>
            <person name="Adams M.D."/>
            <person name="Hunkapiller M.W."/>
            <person name="Myers E.W."/>
            <person name="Venter J.C."/>
        </authorList>
    </citation>
    <scope>NUCLEOTIDE SEQUENCE [LARGE SCALE GENOMIC DNA]</scope>
</reference>
<reference key="10">
    <citation type="journal article" date="2004" name="Genome Res.">
        <title>The status, quality, and expansion of the NIH full-length cDNA project: the Mammalian Gene Collection (MGC).</title>
        <authorList>
            <consortium name="The MGC Project Team"/>
        </authorList>
    </citation>
    <scope>NUCLEOTIDE SEQUENCE [LARGE SCALE MRNA] (ISOFORM 2)</scope>
    <source>
        <tissue>Colon</tissue>
    </source>
</reference>
<reference key="11">
    <citation type="journal article" date="2005" name="J. Immunol.">
        <title>Galectin-9 induces maturation of human monocyte-derived dendritic cells.</title>
        <authorList>
            <person name="Dai S.Y."/>
            <person name="Nakagawa R."/>
            <person name="Itoh A."/>
            <person name="Murakami H."/>
            <person name="Kashio Y."/>
            <person name="Abe H."/>
            <person name="Katoh S."/>
            <person name="Kontani K."/>
            <person name="Kihara M."/>
            <person name="Zhang S.L."/>
            <person name="Hata T."/>
            <person name="Nakamura T."/>
            <person name="Yamauchi A."/>
            <person name="Hirashima M."/>
        </authorList>
    </citation>
    <scope>FUNCTION</scope>
</reference>
<reference key="12">
    <citation type="journal article" date="2005" name="Nat. Immunol.">
        <title>The Tim-3 ligand galectin-9 negatively regulates T helper type 1 immunity.</title>
        <authorList>
            <person name="Zhu C."/>
            <person name="Anderson A.C."/>
            <person name="Schubart A."/>
            <person name="Xiong H."/>
            <person name="Imitola J."/>
            <person name="Khoury S.J."/>
            <person name="Zheng X.X."/>
            <person name="Strom T.B."/>
            <person name="Kuchroo V.K."/>
        </authorList>
    </citation>
    <scope>FUNCTION AS LIGAND FOR HAVCR2/TIM3</scope>
</reference>
<reference key="13">
    <citation type="journal article" date="2010" name="PLoS ONE">
        <title>A crucial role for Kupffer cell-derived galectin-9 in regulation of T cell immunity in hepatitis C infection.</title>
        <authorList>
            <person name="Mengshol J.A."/>
            <person name="Golden-Mason L."/>
            <person name="Arikawa T."/>
            <person name="Smith M."/>
            <person name="Niki T."/>
            <person name="McWilliams R."/>
            <person name="Randall J.A."/>
            <person name="McMahan R."/>
            <person name="Zimmerman M.A."/>
            <person name="Rangachari M."/>
            <person name="Dobrinskikh E."/>
            <person name="Busson P."/>
            <person name="Polyak S.J."/>
            <person name="Hirashima M."/>
            <person name="Rosen H.R."/>
        </authorList>
    </citation>
    <scope>FUNCTION</scope>
    <scope>INDUCTION</scope>
</reference>
<reference key="14">
    <citation type="journal article" date="2011" name="Proc. Natl. Acad. Sci. U.S.A.">
        <title>Galectin-9 binding to cell surface protein disulfide isomerase regulates the redox environment to enhance T-cell migration and HIV entry.</title>
        <authorList>
            <person name="Bi S."/>
            <person name="Hong P.W."/>
            <person name="Lee B."/>
            <person name="Baum L.G."/>
        </authorList>
    </citation>
    <scope>FUNCTION AS LIGAND FOR P4HB</scope>
</reference>
<reference key="15">
    <citation type="journal article" date="2013" name="Biol. Reprod.">
        <title>Profiling Lgals9 splice variant expression at the fetal-maternal interface: implications in normal and pathological human pregnancy.</title>
        <authorList>
            <person name="Heusschen R."/>
            <person name="Freitag N."/>
            <person name="Tirado-Gonzalez I."/>
            <person name="Barrientos G."/>
            <person name="Moschansky P."/>
            <person name="Munoz-Fernandez R."/>
            <person name="Leno-Duran E."/>
            <person name="Klapp B.F."/>
            <person name="Thijssen V.L."/>
            <person name="Blois S.M."/>
        </authorList>
    </citation>
    <scope>SUBCELLULAR LOCATION</scope>
    <scope>ALTERNATIVE SPLICING (ISOFORM 6)</scope>
    <scope>TISSUE SPECIFICITY</scope>
</reference>
<reference key="16">
    <citation type="journal article" date="2013" name="Eur. J. Immunol.">
        <title>Proinflammatory stimuli induce galectin-9 in human mesenchymal stromal cells to suppress T-cell proliferation.</title>
        <authorList>
            <person name="Gieseke F."/>
            <person name="Kruchen A."/>
            <person name="Tzaribachev N."/>
            <person name="Bentzien F."/>
            <person name="Dominici M."/>
            <person name="Muller I."/>
        </authorList>
    </citation>
    <scope>FUNCTION</scope>
    <scope>SUBCELLULAR LOCATION</scope>
    <scope>INDUCTION</scope>
</reference>
<reference key="17">
    <citation type="journal article" date="2013" name="J. Virol.">
        <title>Galectin-9 functionally impairs natural killer cells in humans and mice.</title>
        <authorList>
            <person name="Golden-Mason L."/>
            <person name="McMahan R.H."/>
            <person name="Strong M."/>
            <person name="Reisdorph R."/>
            <person name="Mahaffey S."/>
            <person name="Palmer B.E."/>
            <person name="Cheng L."/>
            <person name="Kulesza C."/>
            <person name="Hirashima M."/>
            <person name="Niki T."/>
            <person name="Rosen H.R."/>
        </authorList>
    </citation>
    <scope>FUNCTION</scope>
</reference>
<reference key="18">
    <citation type="journal article" date="2014" name="AIDS Res. Hum. Retroviruses">
        <title>Galectin-9 is rapidly released during acute HIV-1 infection and remains sustained at high levels despite viral suppression even in elite controllers.</title>
        <authorList>
            <person name="Tandon R."/>
            <person name="Chew G.M."/>
            <person name="Byron M.M."/>
            <person name="Borrow P."/>
            <person name="Niki T."/>
            <person name="Hirashima M."/>
            <person name="Barbour J.D."/>
            <person name="Norris P.J."/>
            <person name="Lanteri M.C."/>
            <person name="Martin J.N."/>
            <person name="Deeks S.G."/>
            <person name="Ndhlovu L.C."/>
        </authorList>
    </citation>
    <scope>INDUCTION</scope>
</reference>
<reference key="19">
    <citation type="journal article" date="2014" name="Biochim. Biophys. Acta">
        <title>Endothelial LGALS9 splice variant expression in endothelial cell biology and angiogenesis.</title>
        <authorList>
            <person name="Heusschen R."/>
            <person name="Schulkens I.A."/>
            <person name="van Beijnum J."/>
            <person name="Griffioen A.W."/>
            <person name="Thijssen V.L."/>
        </authorList>
    </citation>
    <scope>FUNCTION</scope>
    <scope>TISSUE SPECIFICITY</scope>
    <scope>SUBCELLULAR LOCATION</scope>
    <scope>ALTERNATIVE SPLICING (ISOFORMS 1; 2; 3; 4 AND 5)</scope>
</reference>
<reference key="20">
    <citation type="journal article" date="2014" name="PLoS ONE">
        <title>Galectin-9 enhances cytokine secretion, but suppresses survival and degranulation, in human mast cell line.</title>
        <authorList>
            <person name="Kojima R."/>
            <person name="Ohno T."/>
            <person name="Iikura M."/>
            <person name="Niki T."/>
            <person name="Hirashima M."/>
            <person name="Iwaya K."/>
            <person name="Tsuda H."/>
            <person name="Nonoyama S."/>
            <person name="Matsuda A."/>
            <person name="Saito H."/>
            <person name="Matsumoto K."/>
            <person name="Nakae S."/>
        </authorList>
    </citation>
    <scope>FUNCTION</scope>
</reference>
<reference key="21">
    <citation type="journal article" date="2016" name="Cell. Mol. Immunol.">
        <title>The Galectin-9/Tim-3 pathway is involved in the regulation of NK cell function at the maternal-fetal interface in early pregnancy.</title>
        <authorList>
            <person name="Li Y.H."/>
            <person name="Zhou W.H."/>
            <person name="Tao Y."/>
            <person name="Wang S.C."/>
            <person name="Jiang Y.L."/>
            <person name="Zhang D."/>
            <person name="Piao H.L."/>
            <person name="Fu Q."/>
            <person name="Li D.J."/>
            <person name="Du M.R."/>
        </authorList>
    </citation>
    <scope>FUNCTION</scope>
    <scope>SUBCELLULAR LOCATION</scope>
    <scope>TISSUE SPECIFICITY</scope>
</reference>
<reference key="22">
    <citation type="journal article" date="2015" name="J. Cell. Mol. Med.">
        <title>Up-regulation of galectin-9 induces cell migration in human dendritic cells infected with dengue virus.</title>
        <authorList>
            <person name="Hsu Y.L."/>
            <person name="Wang M.Y."/>
            <person name="Ho L.J."/>
            <person name="Huang C.Y."/>
            <person name="Lai J.H."/>
        </authorList>
    </citation>
    <scope>FUNCTION</scope>
    <scope>INDUCTION</scope>
</reference>
<reference key="23">
    <citation type="journal article" date="2008" name="J. Mol. Biol.">
        <title>Structural analysis of the human galectin-9 N-terminal carbohydrate recognition domain reveals unexpected properties that differ from the mouse orthologue.</title>
        <authorList>
            <person name="Nagae M."/>
            <person name="Nishi N."/>
            <person name="Nakamura-Tsuruta S."/>
            <person name="Hirabayashi J."/>
            <person name="Wakatsuki S."/>
            <person name="Kato R."/>
        </authorList>
    </citation>
    <scope>X-RAY CRYSTALLOGRAPHY (1.85 ANGSTROMS) OF 1-148 IN COMPLEXES WITH LACTOSE AND COMPLEX BETA-GALACTOSIDE</scope>
    <scope>SUBUNIT</scope>
    <scope>CARBOHYDRATE SPECIFICITY</scope>
    <scope>FUNCTION</scope>
</reference>
<reference key="24">
    <citation type="submission" date="2008-04" db="PDB data bank">
        <title>Crystal structure of N-terminal domain of human galectin-9 containing L-acetyllactosamine.</title>
        <authorList>
            <consortium name="RIKEN structural genomics initiative (RSGI)"/>
        </authorList>
    </citation>
    <scope>X-RAY CRYSTALLOGRAPHY (2.17 ANGSTROMS) OF 1-150 IN COMPLEX WITH L-ACETYLLACTOSAMINE</scope>
</reference>
<reference key="25">
    <citation type="journal article" date="2009" name="Glycobiology">
        <title>Structural analysis of the recognition mechanism of poly-N-acetyllactosamine by the human galectin-9 N-terminal carbohydrate recognition domain.</title>
        <authorList>
            <person name="Nagae M."/>
            <person name="Nishi N."/>
            <person name="Murata T."/>
            <person name="Usui T."/>
            <person name="Nakamura T."/>
            <person name="Wakatsuki S."/>
            <person name="Kato R."/>
        </authorList>
    </citation>
    <scope>X-RAY CRYSTALLOGRAPHY (1.3 ANGSTROMS) OF 1-148 IN COMPLEXES WITH N-ACETYLLACTOSAMINE OLIGOMERS</scope>
    <scope>FUNCTION</scope>
</reference>
<reference key="26">
    <citation type="journal article" date="2010" name="J. Biol. Chem.">
        <title>X-ray structures of human galectin-9 C-terminal domain in complexes with a biantennary oligosaccharide and sialyllactose.</title>
        <authorList>
            <person name="Yoshida H."/>
            <person name="Teraoka M."/>
            <person name="Nishi N."/>
            <person name="Nakakita S."/>
            <person name="Nakamura T."/>
            <person name="Hirashima M."/>
            <person name="Kamitori S."/>
        </authorList>
    </citation>
    <scope>X-RAY CRYSTALLOGRAPHY (1.5 ANGSTROMS) OF 186-323 IN COMPLEXES WITH OLIGOSACCHARIDES</scope>
</reference>
<name>LEG9_HUMAN</name>
<gene>
    <name type="primary">LGALS9</name>
</gene>
<dbReference type="EMBL" id="Z49107">
    <property type="protein sequence ID" value="CAA88922.1"/>
    <property type="molecule type" value="mRNA"/>
</dbReference>
<dbReference type="EMBL" id="AB006782">
    <property type="protein sequence ID" value="BAA22166.1"/>
    <property type="molecule type" value="mRNA"/>
</dbReference>
<dbReference type="EMBL" id="AB005894">
    <property type="protein sequence ID" value="BAA31542.1"/>
    <property type="molecule type" value="mRNA"/>
</dbReference>
<dbReference type="EMBL" id="AB003517">
    <property type="protein sequence ID" value="BAF76327.1"/>
    <property type="molecule type" value="mRNA"/>
</dbReference>
<dbReference type="EMBL" id="AB008492">
    <property type="protein sequence ID" value="BAF76328.1"/>
    <property type="molecule type" value="mRNA"/>
</dbReference>
<dbReference type="EMBL" id="AB040130">
    <property type="protein sequence ID" value="BAB83623.1"/>
    <property type="molecule type" value="Genomic_DNA"/>
</dbReference>
<dbReference type="EMBL" id="AB040130">
    <property type="protein sequence ID" value="BAB83625.1"/>
    <property type="molecule type" value="Genomic_DNA"/>
</dbReference>
<dbReference type="EMBL" id="AB040130">
    <property type="protein sequence ID" value="BAB83624.1"/>
    <property type="molecule type" value="Genomic_DNA"/>
</dbReference>
<dbReference type="EMBL" id="AJ288083">
    <property type="protein sequence ID" value="CAB93851.1"/>
    <property type="molecule type" value="Genomic_DNA"/>
</dbReference>
<dbReference type="EMBL" id="AJ288084">
    <property type="protein sequence ID" value="CAB93851.1"/>
    <property type="status" value="JOINED"/>
    <property type="molecule type" value="Genomic_DNA"/>
</dbReference>
<dbReference type="EMBL" id="AJ288085">
    <property type="protein sequence ID" value="CAB93851.1"/>
    <property type="status" value="JOINED"/>
    <property type="molecule type" value="Genomic_DNA"/>
</dbReference>
<dbReference type="EMBL" id="AJ288086">
    <property type="protein sequence ID" value="CAB93851.1"/>
    <property type="status" value="JOINED"/>
    <property type="molecule type" value="Genomic_DNA"/>
</dbReference>
<dbReference type="EMBL" id="AJ288087">
    <property type="protein sequence ID" value="CAB93851.1"/>
    <property type="status" value="JOINED"/>
    <property type="molecule type" value="Genomic_DNA"/>
</dbReference>
<dbReference type="EMBL" id="AJ288088">
    <property type="protein sequence ID" value="CAB93851.1"/>
    <property type="status" value="JOINED"/>
    <property type="molecule type" value="Genomic_DNA"/>
</dbReference>
<dbReference type="EMBL" id="AJ288089">
    <property type="protein sequence ID" value="CAB93851.1"/>
    <property type="status" value="JOINED"/>
    <property type="molecule type" value="Genomic_DNA"/>
</dbReference>
<dbReference type="EMBL" id="AJ288090">
    <property type="protein sequence ID" value="CAB93851.1"/>
    <property type="status" value="JOINED"/>
    <property type="molecule type" value="Genomic_DNA"/>
</dbReference>
<dbReference type="EMBL" id="AK223232">
    <property type="protein sequence ID" value="BAD96952.1"/>
    <property type="molecule type" value="mRNA"/>
</dbReference>
<dbReference type="EMBL" id="AC015688">
    <property type="status" value="NOT_ANNOTATED_CDS"/>
    <property type="molecule type" value="Genomic_DNA"/>
</dbReference>
<dbReference type="EMBL" id="CH471159">
    <property type="protein sequence ID" value="EAW51037.1"/>
    <property type="molecule type" value="Genomic_DNA"/>
</dbReference>
<dbReference type="EMBL" id="CH471159">
    <property type="protein sequence ID" value="EAW51038.1"/>
    <property type="molecule type" value="Genomic_DNA"/>
</dbReference>
<dbReference type="EMBL" id="CH471159">
    <property type="protein sequence ID" value="EAW51039.1"/>
    <property type="molecule type" value="Genomic_DNA"/>
</dbReference>
<dbReference type="EMBL" id="CH471159">
    <property type="protein sequence ID" value="EAW51044.1"/>
    <property type="molecule type" value="Genomic_DNA"/>
</dbReference>
<dbReference type="EMBL" id="BC105942">
    <property type="protein sequence ID" value="AAI05943.1"/>
    <property type="molecule type" value="mRNA"/>
</dbReference>
<dbReference type="EMBL" id="BC105944">
    <property type="protein sequence ID" value="AAI05945.1"/>
    <property type="molecule type" value="mRNA"/>
</dbReference>
<dbReference type="EMBL" id="BC110340">
    <property type="protein sequence ID" value="AAI10341.1"/>
    <property type="molecule type" value="mRNA"/>
</dbReference>
<dbReference type="CCDS" id="CCDS11222.1">
    <molecule id="O00182-1"/>
</dbReference>
<dbReference type="CCDS" id="CCDS32592.1">
    <molecule id="O00182-2"/>
</dbReference>
<dbReference type="CCDS" id="CCDS82093.1">
    <molecule id="O00182-4"/>
</dbReference>
<dbReference type="RefSeq" id="NP_001317092.1">
    <molecule id="O00182-4"/>
    <property type="nucleotide sequence ID" value="NM_001330163.2"/>
</dbReference>
<dbReference type="RefSeq" id="NP_002299.2">
    <molecule id="O00182-2"/>
    <property type="nucleotide sequence ID" value="NM_002308.4"/>
</dbReference>
<dbReference type="RefSeq" id="NP_033665.1">
    <molecule id="O00182-1"/>
    <property type="nucleotide sequence ID" value="NM_009587.3"/>
</dbReference>
<dbReference type="RefSeq" id="XP_006721955.1">
    <molecule id="O00182-3"/>
    <property type="nucleotide sequence ID" value="XM_006721892.4"/>
</dbReference>
<dbReference type="RefSeq" id="XP_006721958.1">
    <molecule id="O00182-5"/>
    <property type="nucleotide sequence ID" value="XM_006721895.5"/>
</dbReference>
<dbReference type="RefSeq" id="XP_016880112.1">
    <property type="nucleotide sequence ID" value="XM_017024623.1"/>
</dbReference>
<dbReference type="RefSeq" id="XP_054172020.1">
    <molecule id="O00182-3"/>
    <property type="nucleotide sequence ID" value="XM_054316045.1"/>
</dbReference>
<dbReference type="RefSeq" id="XP_054172022.1">
    <molecule id="O00182-5"/>
    <property type="nucleotide sequence ID" value="XM_054316047.1"/>
</dbReference>
<dbReference type="PDB" id="2EAK">
    <property type="method" value="X-ray"/>
    <property type="resolution" value="1.97 A"/>
    <property type="chains" value="A/B/C=1-148"/>
</dbReference>
<dbReference type="PDB" id="2EAL">
    <property type="method" value="X-ray"/>
    <property type="resolution" value="1.85 A"/>
    <property type="chains" value="A/B=1-148"/>
</dbReference>
<dbReference type="PDB" id="2YY1">
    <property type="method" value="X-ray"/>
    <property type="resolution" value="2.17 A"/>
    <property type="chains" value="A=1-147"/>
</dbReference>
<dbReference type="PDB" id="2ZHK">
    <property type="method" value="X-ray"/>
    <property type="resolution" value="1.80 A"/>
    <property type="chains" value="A/B=1-148"/>
</dbReference>
<dbReference type="PDB" id="2ZHL">
    <property type="method" value="X-ray"/>
    <property type="resolution" value="1.75 A"/>
    <property type="chains" value="A/B/C/D=1-148"/>
</dbReference>
<dbReference type="PDB" id="2ZHM">
    <property type="method" value="X-ray"/>
    <property type="resolution" value="1.84 A"/>
    <property type="chains" value="A/B/C/D=1-148"/>
</dbReference>
<dbReference type="PDB" id="2ZHN">
    <property type="method" value="X-ray"/>
    <property type="resolution" value="1.30 A"/>
    <property type="chains" value="A=1-148"/>
</dbReference>
<dbReference type="PDB" id="3LSD">
    <property type="method" value="X-ray"/>
    <property type="resolution" value="2.03 A"/>
    <property type="chains" value="A=6-148"/>
</dbReference>
<dbReference type="PDB" id="3LSE">
    <property type="method" value="X-ray"/>
    <property type="resolution" value="2.69 A"/>
    <property type="chains" value="A=6-148"/>
</dbReference>
<dbReference type="PDB" id="3NV1">
    <property type="method" value="X-ray"/>
    <property type="resolution" value="1.50 A"/>
    <property type="chains" value="A=218-355"/>
</dbReference>
<dbReference type="PDB" id="3NV2">
    <property type="method" value="X-ray"/>
    <property type="resolution" value="2.34 A"/>
    <property type="chains" value="A=218-355"/>
</dbReference>
<dbReference type="PDB" id="3NV3">
    <property type="method" value="X-ray"/>
    <property type="resolution" value="1.57 A"/>
    <property type="chains" value="A=218-355"/>
</dbReference>
<dbReference type="PDB" id="3NV4">
    <property type="method" value="X-ray"/>
    <property type="resolution" value="1.99 A"/>
    <property type="chains" value="A=218-355"/>
</dbReference>
<dbReference type="PDB" id="3WLU">
    <property type="method" value="X-ray"/>
    <property type="resolution" value="1.40 A"/>
    <property type="chains" value="A/B/C/D=5-148"/>
</dbReference>
<dbReference type="PDB" id="3WV6">
    <property type="method" value="X-ray"/>
    <property type="resolution" value="1.95 A"/>
    <property type="chains" value="A/B=1-355"/>
</dbReference>
<dbReference type="PDBsum" id="2EAK"/>
<dbReference type="PDBsum" id="2EAL"/>
<dbReference type="PDBsum" id="2YY1"/>
<dbReference type="PDBsum" id="2ZHK"/>
<dbReference type="PDBsum" id="2ZHL"/>
<dbReference type="PDBsum" id="2ZHM"/>
<dbReference type="PDBsum" id="2ZHN"/>
<dbReference type="PDBsum" id="3LSD"/>
<dbReference type="PDBsum" id="3LSE"/>
<dbReference type="PDBsum" id="3NV1"/>
<dbReference type="PDBsum" id="3NV2"/>
<dbReference type="PDBsum" id="3NV3"/>
<dbReference type="PDBsum" id="3NV4"/>
<dbReference type="PDBsum" id="3WLU"/>
<dbReference type="PDBsum" id="3WV6"/>
<dbReference type="SMR" id="O00182"/>
<dbReference type="BioGRID" id="110156">
    <property type="interactions" value="592"/>
</dbReference>
<dbReference type="FunCoup" id="O00182">
    <property type="interactions" value="233"/>
</dbReference>
<dbReference type="IntAct" id="O00182">
    <property type="interactions" value="123"/>
</dbReference>
<dbReference type="MINT" id="O00182"/>
<dbReference type="STRING" id="9606.ENSP00000378856"/>
<dbReference type="BindingDB" id="O00182"/>
<dbReference type="ChEMBL" id="CHEMBL5474"/>
<dbReference type="DrugBank" id="DB04472">
    <property type="generic name" value="(R)-1-Para-Nitro-Phenyl-2-Azido-Ethanol"/>
</dbReference>
<dbReference type="DrugCentral" id="O00182"/>
<dbReference type="UniLectin" id="O00182"/>
<dbReference type="iPTMnet" id="O00182"/>
<dbReference type="PhosphoSitePlus" id="O00182"/>
<dbReference type="BioMuta" id="LGALS9"/>
<dbReference type="jPOST" id="O00182"/>
<dbReference type="MassIVE" id="O00182"/>
<dbReference type="PaxDb" id="9606-ENSP00000378856"/>
<dbReference type="PeptideAtlas" id="O00182"/>
<dbReference type="ProteomicsDB" id="30394"/>
<dbReference type="ProteomicsDB" id="47764">
    <molecule id="O00182-1"/>
</dbReference>
<dbReference type="ProteomicsDB" id="47765">
    <molecule id="O00182-2"/>
</dbReference>
<dbReference type="ProteomicsDB" id="75191"/>
<dbReference type="Antibodypedia" id="26196">
    <property type="antibodies" value="678 antibodies from 41 providers"/>
</dbReference>
<dbReference type="CPTC" id="O00182">
    <property type="antibodies" value="1 antibody"/>
</dbReference>
<dbReference type="DNASU" id="3965"/>
<dbReference type="Ensembl" id="ENST00000302228.9">
    <molecule id="O00182-2"/>
    <property type="protein sequence ID" value="ENSP00000306228.5"/>
    <property type="gene ID" value="ENSG00000168961.17"/>
</dbReference>
<dbReference type="Ensembl" id="ENST00000313648.10">
    <molecule id="O00182-4"/>
    <property type="protein sequence ID" value="ENSP00000318214.6"/>
    <property type="gene ID" value="ENSG00000168961.17"/>
</dbReference>
<dbReference type="Ensembl" id="ENST00000395473.7">
    <molecule id="O00182-1"/>
    <property type="protein sequence ID" value="ENSP00000378856.2"/>
    <property type="gene ID" value="ENSG00000168961.17"/>
</dbReference>
<dbReference type="GeneID" id="3965"/>
<dbReference type="KEGG" id="hsa:3965"/>
<dbReference type="MANE-Select" id="ENST00000395473.7">
    <property type="protein sequence ID" value="ENSP00000378856.2"/>
    <property type="RefSeq nucleotide sequence ID" value="NM_009587.3"/>
    <property type="RefSeq protein sequence ID" value="NP_033665.1"/>
</dbReference>
<dbReference type="UCSC" id="uc002gzp.4">
    <molecule id="O00182-1"/>
    <property type="organism name" value="human"/>
</dbReference>
<dbReference type="UCSC" id="uc060cvd.1">
    <property type="organism name" value="human"/>
</dbReference>
<dbReference type="AGR" id="HGNC:6570"/>
<dbReference type="CTD" id="3965"/>
<dbReference type="DisGeNET" id="3965"/>
<dbReference type="GeneCards" id="LGALS9"/>
<dbReference type="HGNC" id="HGNC:6570">
    <property type="gene designation" value="LGALS9"/>
</dbReference>
<dbReference type="HPA" id="ENSG00000168961">
    <property type="expression patterns" value="Tissue enhanced (intestine, stomach)"/>
</dbReference>
<dbReference type="MIM" id="601879">
    <property type="type" value="gene"/>
</dbReference>
<dbReference type="neXtProt" id="NX_O00182"/>
<dbReference type="OpenTargets" id="ENSG00000168961"/>
<dbReference type="PharmGKB" id="PA30347"/>
<dbReference type="VEuPathDB" id="HostDB:ENSG00000168961"/>
<dbReference type="eggNOG" id="KOG3587">
    <property type="taxonomic scope" value="Eukaryota"/>
</dbReference>
<dbReference type="GeneTree" id="ENSGT00940000162701"/>
<dbReference type="HOGENOM" id="CLU_037794_1_0_1"/>
<dbReference type="InParanoid" id="O00182"/>
<dbReference type="OMA" id="GVHWGGR"/>
<dbReference type="OrthoDB" id="5795596at2759"/>
<dbReference type="PAN-GO" id="O00182">
    <property type="GO annotations" value="7 GO annotations based on evolutionary models"/>
</dbReference>
<dbReference type="PhylomeDB" id="O00182"/>
<dbReference type="TreeFam" id="TF315551"/>
<dbReference type="PathwayCommons" id="O00182"/>
<dbReference type="Reactome" id="R-HSA-451927">
    <property type="pathway name" value="Interleukin-2 family signaling"/>
</dbReference>
<dbReference type="SignaLink" id="O00182"/>
<dbReference type="BioGRID-ORCS" id="3965">
    <property type="hits" value="136 hits in 1150 CRISPR screens"/>
</dbReference>
<dbReference type="ChiTaRS" id="LGALS9">
    <property type="organism name" value="human"/>
</dbReference>
<dbReference type="EvolutionaryTrace" id="O00182"/>
<dbReference type="GeneWiki" id="LGALS9"/>
<dbReference type="GenomeRNAi" id="3965"/>
<dbReference type="Pharos" id="O00182">
    <property type="development level" value="Tchem"/>
</dbReference>
<dbReference type="PRO" id="PR:O00182"/>
<dbReference type="Proteomes" id="UP000005640">
    <property type="component" value="Chromosome 17"/>
</dbReference>
<dbReference type="RNAct" id="O00182">
    <property type="molecule type" value="protein"/>
</dbReference>
<dbReference type="Bgee" id="ENSG00000168961">
    <property type="expression patterns" value="Expressed in monocyte and 176 other cell types or tissues"/>
</dbReference>
<dbReference type="ExpressionAtlas" id="O00182">
    <property type="expression patterns" value="baseline and differential"/>
</dbReference>
<dbReference type="GO" id="GO:0062023">
    <property type="term" value="C:collagen-containing extracellular matrix"/>
    <property type="evidence" value="ECO:0007005"/>
    <property type="project" value="BHF-UCL"/>
</dbReference>
<dbReference type="GO" id="GO:0005737">
    <property type="term" value="C:cytoplasm"/>
    <property type="evidence" value="ECO:0000314"/>
    <property type="project" value="UniProtKB"/>
</dbReference>
<dbReference type="GO" id="GO:0005829">
    <property type="term" value="C:cytosol"/>
    <property type="evidence" value="ECO:0000314"/>
    <property type="project" value="HPA"/>
</dbReference>
<dbReference type="GO" id="GO:0005615">
    <property type="term" value="C:extracellular space"/>
    <property type="evidence" value="ECO:0000314"/>
    <property type="project" value="UniProtKB"/>
</dbReference>
<dbReference type="GO" id="GO:0005634">
    <property type="term" value="C:nucleus"/>
    <property type="evidence" value="ECO:0000314"/>
    <property type="project" value="UniProtKB"/>
</dbReference>
<dbReference type="GO" id="GO:0030246">
    <property type="term" value="F:carbohydrate binding"/>
    <property type="evidence" value="ECO:0000314"/>
    <property type="project" value="UniProtKB"/>
</dbReference>
<dbReference type="GO" id="GO:0048030">
    <property type="term" value="F:disaccharide binding"/>
    <property type="evidence" value="ECO:0000315"/>
    <property type="project" value="UniProtKB"/>
</dbReference>
<dbReference type="GO" id="GO:0019899">
    <property type="term" value="F:enzyme binding"/>
    <property type="evidence" value="ECO:0000353"/>
    <property type="project" value="UniProtKB"/>
</dbReference>
<dbReference type="GO" id="GO:0005534">
    <property type="term" value="F:galactose binding"/>
    <property type="evidence" value="ECO:0000304"/>
    <property type="project" value="ProtInc"/>
</dbReference>
<dbReference type="GO" id="GO:0016936">
    <property type="term" value="F:galactoside binding"/>
    <property type="evidence" value="ECO:0000318"/>
    <property type="project" value="GO_Central"/>
</dbReference>
<dbReference type="GO" id="GO:0070492">
    <property type="term" value="F:oligosaccharide binding"/>
    <property type="evidence" value="ECO:0000314"/>
    <property type="project" value="UniProt"/>
</dbReference>
<dbReference type="GO" id="GO:0048018">
    <property type="term" value="F:receptor ligand activity"/>
    <property type="evidence" value="ECO:0000314"/>
    <property type="project" value="UniProt"/>
</dbReference>
<dbReference type="GO" id="GO:0071346">
    <property type="term" value="P:cellular response to type II interferon"/>
    <property type="evidence" value="ECO:0000314"/>
    <property type="project" value="UniProtKB"/>
</dbReference>
<dbReference type="GO" id="GO:0098586">
    <property type="term" value="P:cellular response to virus"/>
    <property type="evidence" value="ECO:0000315"/>
    <property type="project" value="UniProtKB"/>
</dbReference>
<dbReference type="GO" id="GO:0006935">
    <property type="term" value="P:chemotaxis"/>
    <property type="evidence" value="ECO:0007669"/>
    <property type="project" value="UniProtKB-KW"/>
</dbReference>
<dbReference type="GO" id="GO:0070371">
    <property type="term" value="P:ERK1 and ERK2 cascade"/>
    <property type="evidence" value="ECO:0000314"/>
    <property type="project" value="UniProtKB"/>
</dbReference>
<dbReference type="GO" id="GO:0007565">
    <property type="term" value="P:female pregnancy"/>
    <property type="evidence" value="ECO:0000314"/>
    <property type="project" value="UniProtKB"/>
</dbReference>
<dbReference type="GO" id="GO:0006954">
    <property type="term" value="P:inflammatory response"/>
    <property type="evidence" value="ECO:0000314"/>
    <property type="project" value="UniProtKB"/>
</dbReference>
<dbReference type="GO" id="GO:0060135">
    <property type="term" value="P:maternal process involved in female pregnancy"/>
    <property type="evidence" value="ECO:0000314"/>
    <property type="project" value="UniProtKB"/>
</dbReference>
<dbReference type="GO" id="GO:0002519">
    <property type="term" value="P:natural killer cell tolerance induction"/>
    <property type="evidence" value="ECO:0000315"/>
    <property type="project" value="UniProtKB"/>
</dbReference>
<dbReference type="GO" id="GO:0046007">
    <property type="term" value="P:negative regulation of activated T cell proliferation"/>
    <property type="evidence" value="ECO:0000315"/>
    <property type="project" value="UniProtKB"/>
</dbReference>
<dbReference type="GO" id="GO:2000562">
    <property type="term" value="P:negative regulation of CD4-positive, alpha-beta T cell proliferation"/>
    <property type="evidence" value="ECO:0000314"/>
    <property type="project" value="UniProtKB"/>
</dbReference>
<dbReference type="GO" id="GO:0032682">
    <property type="term" value="P:negative regulation of chemokine production"/>
    <property type="evidence" value="ECO:0000315"/>
    <property type="project" value="UniProtKB"/>
</dbReference>
<dbReference type="GO" id="GO:0010629">
    <property type="term" value="P:negative regulation of gene expression"/>
    <property type="evidence" value="ECO:0000314"/>
    <property type="project" value="UniProtKB"/>
</dbReference>
<dbReference type="GO" id="GO:0043305">
    <property type="term" value="P:negative regulation of mast cell degranulation"/>
    <property type="evidence" value="ECO:0000315"/>
    <property type="project" value="UniProtKB"/>
</dbReference>
<dbReference type="GO" id="GO:0045953">
    <property type="term" value="P:negative regulation of natural killer cell mediated cytotoxicity"/>
    <property type="evidence" value="ECO:0000314"/>
    <property type="project" value="UniProtKB"/>
</dbReference>
<dbReference type="GO" id="GO:0002826">
    <property type="term" value="P:negative regulation of T-helper 1 type immune response"/>
    <property type="evidence" value="ECO:0000314"/>
    <property type="project" value="UniProt"/>
</dbReference>
<dbReference type="GO" id="GO:0032720">
    <property type="term" value="P:negative regulation of tumor necrosis factor production"/>
    <property type="evidence" value="ECO:0000315"/>
    <property type="project" value="UniProtKB"/>
</dbReference>
<dbReference type="GO" id="GO:0032689">
    <property type="term" value="P:negative regulation of type II interferon production"/>
    <property type="evidence" value="ECO:0000314"/>
    <property type="project" value="UniProtKB"/>
</dbReference>
<dbReference type="GO" id="GO:0038066">
    <property type="term" value="P:p38MAPK cascade"/>
    <property type="evidence" value="ECO:0000314"/>
    <property type="project" value="UniProtKB"/>
</dbReference>
<dbReference type="GO" id="GO:0070241">
    <property type="term" value="P:positive regulation of activated T cell autonomous cell death"/>
    <property type="evidence" value="ECO:0000314"/>
    <property type="project" value="UniProtKB"/>
</dbReference>
<dbReference type="GO" id="GO:0043123">
    <property type="term" value="P:positive regulation of canonical NF-kappaB signal transduction"/>
    <property type="evidence" value="ECO:0007001"/>
    <property type="project" value="UniProtKB"/>
</dbReference>
<dbReference type="GO" id="GO:2000563">
    <property type="term" value="P:positive regulation of CD4-positive, alpha-beta T cell proliferation"/>
    <property type="evidence" value="ECO:0000314"/>
    <property type="project" value="UniProtKB"/>
</dbReference>
<dbReference type="GO" id="GO:0032834">
    <property type="term" value="P:positive regulation of CD4-positive, CD25-positive, alpha-beta regulatory T cell differentiation involved in immune response"/>
    <property type="evidence" value="ECO:0000314"/>
    <property type="project" value="UniProtKB"/>
</dbReference>
<dbReference type="GO" id="GO:2000670">
    <property type="term" value="P:positive regulation of dendritic cell apoptotic process"/>
    <property type="evidence" value="ECO:0000314"/>
    <property type="project" value="UniProtKB"/>
</dbReference>
<dbReference type="GO" id="GO:2000510">
    <property type="term" value="P:positive regulation of dendritic cell chemotaxis"/>
    <property type="evidence" value="ECO:0000315"/>
    <property type="project" value="UniProtKB"/>
</dbReference>
<dbReference type="GO" id="GO:2001200">
    <property type="term" value="P:positive regulation of dendritic cell differentiation"/>
    <property type="evidence" value="ECO:0000315"/>
    <property type="project" value="UniProtKB"/>
</dbReference>
<dbReference type="GO" id="GO:0070374">
    <property type="term" value="P:positive regulation of ERK1 and ERK2 cascade"/>
    <property type="evidence" value="ECO:0000315"/>
    <property type="project" value="UniProtKB"/>
</dbReference>
<dbReference type="GO" id="GO:0010628">
    <property type="term" value="P:positive regulation of gene expression"/>
    <property type="evidence" value="ECO:0000314"/>
    <property type="project" value="UniProtKB"/>
</dbReference>
<dbReference type="GO" id="GO:0032731">
    <property type="term" value="P:positive regulation of interleukin-1 beta production"/>
    <property type="evidence" value="ECO:0000314"/>
    <property type="project" value="UniProtKB"/>
</dbReference>
<dbReference type="GO" id="GO:0032733">
    <property type="term" value="P:positive regulation of interleukin-10 production"/>
    <property type="evidence" value="ECO:0000314"/>
    <property type="project" value="UniProtKB"/>
</dbReference>
<dbReference type="GO" id="GO:0032735">
    <property type="term" value="P:positive regulation of interleukin-12 production"/>
    <property type="evidence" value="ECO:0000315"/>
    <property type="project" value="UniProtKB"/>
</dbReference>
<dbReference type="GO" id="GO:0032736">
    <property type="term" value="P:positive regulation of interleukin-13 production"/>
    <property type="evidence" value="ECO:0000314"/>
    <property type="project" value="UniProtKB"/>
</dbReference>
<dbReference type="GO" id="GO:0032753">
    <property type="term" value="P:positive regulation of interleukin-4 production"/>
    <property type="evidence" value="ECO:0000314"/>
    <property type="project" value="UniProtKB"/>
</dbReference>
<dbReference type="GO" id="GO:0032755">
    <property type="term" value="P:positive regulation of interleukin-6 production"/>
    <property type="evidence" value="ECO:0000315"/>
    <property type="project" value="UniProtKB"/>
</dbReference>
<dbReference type="GO" id="GO:0032757">
    <property type="term" value="P:positive regulation of interleukin-8 production"/>
    <property type="evidence" value="ECO:0000315"/>
    <property type="project" value="UniProtKB"/>
</dbReference>
<dbReference type="GO" id="GO:0071639">
    <property type="term" value="P:positive regulation of monocyte chemotactic protein-1 production"/>
    <property type="evidence" value="ECO:0000315"/>
    <property type="project" value="UniProtKB"/>
</dbReference>
<dbReference type="GO" id="GO:0051092">
    <property type="term" value="P:positive regulation of NF-kappaB transcription factor activity"/>
    <property type="evidence" value="ECO:0000315"/>
    <property type="project" value="UniProtKB"/>
</dbReference>
<dbReference type="GO" id="GO:1901224">
    <property type="term" value="P:positive regulation of non-canonical NF-kappaB signal transduction"/>
    <property type="evidence" value="ECO:0000315"/>
    <property type="project" value="UniProtKB"/>
</dbReference>
<dbReference type="GO" id="GO:2001190">
    <property type="term" value="P:positive regulation of T cell activation via T cell receptor contact with antigen bound to MHC molecule on antigen presenting cell"/>
    <property type="evidence" value="ECO:0000314"/>
    <property type="project" value="UniProtKB"/>
</dbReference>
<dbReference type="GO" id="GO:2000406">
    <property type="term" value="P:positive regulation of T cell migration"/>
    <property type="evidence" value="ECO:0000314"/>
    <property type="project" value="UniProt"/>
</dbReference>
<dbReference type="GO" id="GO:0071636">
    <property type="term" value="P:positive regulation of transforming growth factor beta production"/>
    <property type="evidence" value="ECO:0000314"/>
    <property type="project" value="UniProtKB"/>
</dbReference>
<dbReference type="GO" id="GO:0032760">
    <property type="term" value="P:positive regulation of tumor necrosis factor production"/>
    <property type="evidence" value="ECO:0000314"/>
    <property type="project" value="UniProtKB"/>
</dbReference>
<dbReference type="GO" id="GO:0032729">
    <property type="term" value="P:positive regulation of type II interferon production"/>
    <property type="evidence" value="ECO:0000314"/>
    <property type="project" value="UniProtKB"/>
</dbReference>
<dbReference type="GO" id="GO:0046598">
    <property type="term" value="P:positive regulation of viral entry into host cell"/>
    <property type="evidence" value="ECO:0000314"/>
    <property type="project" value="UniProtKB"/>
</dbReference>
<dbReference type="GO" id="GO:0070555">
    <property type="term" value="P:response to interleukin-1"/>
    <property type="evidence" value="ECO:0000314"/>
    <property type="project" value="UniProtKB"/>
</dbReference>
<dbReference type="GO" id="GO:0032496">
    <property type="term" value="P:response to lipopolysaccharide"/>
    <property type="evidence" value="ECO:0000315"/>
    <property type="project" value="UniProtKB"/>
</dbReference>
<dbReference type="CDD" id="cd00070">
    <property type="entry name" value="GLECT"/>
    <property type="match status" value="2"/>
</dbReference>
<dbReference type="FunFam" id="2.60.120.200:FF:000023">
    <property type="entry name" value="Galectin"/>
    <property type="match status" value="1"/>
</dbReference>
<dbReference type="FunFam" id="2.60.120.200:FF:000078">
    <property type="entry name" value="Galectin"/>
    <property type="match status" value="1"/>
</dbReference>
<dbReference type="Gene3D" id="2.60.120.200">
    <property type="match status" value="2"/>
</dbReference>
<dbReference type="InterPro" id="IPR013320">
    <property type="entry name" value="ConA-like_dom_sf"/>
</dbReference>
<dbReference type="InterPro" id="IPR044156">
    <property type="entry name" value="Galectin-like"/>
</dbReference>
<dbReference type="InterPro" id="IPR001079">
    <property type="entry name" value="Galectin_CRD"/>
</dbReference>
<dbReference type="PANTHER" id="PTHR11346">
    <property type="entry name" value="GALECTIN"/>
    <property type="match status" value="1"/>
</dbReference>
<dbReference type="PANTHER" id="PTHR11346:SF170">
    <property type="entry name" value="GALECTIN-9"/>
    <property type="match status" value="1"/>
</dbReference>
<dbReference type="Pfam" id="PF00337">
    <property type="entry name" value="Gal-bind_lectin"/>
    <property type="match status" value="2"/>
</dbReference>
<dbReference type="SMART" id="SM00908">
    <property type="entry name" value="Gal-bind_lectin"/>
    <property type="match status" value="2"/>
</dbReference>
<dbReference type="SMART" id="SM00276">
    <property type="entry name" value="GLECT"/>
    <property type="match status" value="2"/>
</dbReference>
<dbReference type="SUPFAM" id="SSF49899">
    <property type="entry name" value="Concanavalin A-like lectins/glucanases"/>
    <property type="match status" value="2"/>
</dbReference>
<dbReference type="PROSITE" id="PS51304">
    <property type="entry name" value="GALECTIN"/>
    <property type="match status" value="2"/>
</dbReference>
<evidence type="ECO:0000250" key="1"/>
<evidence type="ECO:0000250" key="2">
    <source>
        <dbReference type="UniProtKB" id="O08573"/>
    </source>
</evidence>
<evidence type="ECO:0000250" key="3">
    <source>
        <dbReference type="UniProtKB" id="P97840"/>
    </source>
</evidence>
<evidence type="ECO:0000255" key="4">
    <source>
        <dbReference type="PROSITE-ProRule" id="PRU00639"/>
    </source>
</evidence>
<evidence type="ECO:0000269" key="5">
    <source>
    </source>
</evidence>
<evidence type="ECO:0000269" key="6">
    <source>
    </source>
</evidence>
<evidence type="ECO:0000269" key="7">
    <source>
    </source>
</evidence>
<evidence type="ECO:0000269" key="8">
    <source>
    </source>
</evidence>
<evidence type="ECO:0000269" key="9">
    <source>
    </source>
</evidence>
<evidence type="ECO:0000269" key="10">
    <source>
    </source>
</evidence>
<evidence type="ECO:0000269" key="11">
    <source>
    </source>
</evidence>
<evidence type="ECO:0000269" key="12">
    <source>
    </source>
</evidence>
<evidence type="ECO:0000269" key="13">
    <source>
    </source>
</evidence>
<evidence type="ECO:0000269" key="14">
    <source>
    </source>
</evidence>
<evidence type="ECO:0000269" key="15">
    <source>
    </source>
</evidence>
<evidence type="ECO:0000269" key="16">
    <source>
    </source>
</evidence>
<evidence type="ECO:0000269" key="17">
    <source>
    </source>
</evidence>
<evidence type="ECO:0000269" key="18">
    <source>
    </source>
</evidence>
<evidence type="ECO:0000269" key="19">
    <source>
    </source>
</evidence>
<evidence type="ECO:0000269" key="20">
    <source ref="7"/>
</evidence>
<evidence type="ECO:0000303" key="21">
    <source>
    </source>
</evidence>
<evidence type="ECO:0000303" key="22">
    <source>
    </source>
</evidence>
<evidence type="ECO:0000303" key="23">
    <source>
    </source>
</evidence>
<evidence type="ECO:0000303" key="24">
    <source>
    </source>
</evidence>
<evidence type="ECO:0000303" key="25">
    <source>
    </source>
</evidence>
<evidence type="ECO:0000303" key="26">
    <source ref="4"/>
</evidence>
<evidence type="ECO:0000303" key="27">
    <source ref="7"/>
</evidence>
<evidence type="ECO:0000305" key="28"/>
<evidence type="ECO:0000305" key="29">
    <source>
    </source>
</evidence>
<evidence type="ECO:0000305" key="30">
    <source ref="24"/>
</evidence>
<evidence type="ECO:0007829" key="31">
    <source>
        <dbReference type="PDB" id="2ZHN"/>
    </source>
</evidence>
<evidence type="ECO:0007829" key="32">
    <source>
        <dbReference type="PDB" id="3NV1"/>
    </source>
</evidence>
<sequence>MAFSGSQAPYLSPAVPFSGTIQGGLQDGLQITVNGTVLSSSGTRFAVNFQTGFSGNDIAFHFNPRFEDGGYVVCNTRQNGSWGPEERKTHMPFQKGMPFDLCFLVQSSDFKVMVNGILFVQYFHRVPFHRVDTISVNGSVQLSYISFQNPRTVPVQPAFSTVPFSQPVCFPPRPRGRRQKPPGVWPANPAPITQTVIHTVQSAPGQMFSTPAIPPMMYPHPAYPMPFITTILGGLYPSKSILLSGTVLPSAQRFHINLCSGNHIAFHLNPRFDENAVVRNTQIDNSWGSEERSLPRKMPFVRGQSFSVWILCEAHCLKVAVDGQHLFEYYHRLRNLPTINRLEVGGDIQLTHVQT</sequence>
<accession>O00182</accession>
<accession>A7VJG6</accession>
<accession>F8W9W4</accession>
<accession>O14532</accession>
<accession>O75028</accession>
<accession>Q3B8N1</accession>
<accession>Q53FQ0</accession>
<accession>Q8WYQ7</accession>
<accession>Q9NQ58</accession>
<proteinExistence type="evidence at protein level"/>
<comment type="function">
    <text evidence="2 3 5 6 7 8 9 10 12 13 15 17 18">Binds galactosides (PubMed:18005988). Has high affinity for the Forssman pentasaccharide (PubMed:18005988). Ligand for HAVCR2/TIM3 (PubMed:16286920). Binding to HAVCR2 induces T-helper type 1 lymphocyte (Th1) death (PubMed:16286920). Also stimulates bactericidal activity in infected macrophages by causing macrophage activation and IL1B secretion which restricts intracellular bacterial growth (By similarity). Ligand for P4HB; the interaction retains P4HB at the cell surface of Th2 T-helper cells, increasing disulfide reductase activity at the plasma membrane, altering the plasma membrane redox state and enhancing cell migration (PubMed:21670307). Ligand for CD44; the interaction enhances binding of SMAD3 to the FOXP3 promoter, leading to up-regulation of FOXP3 expression and increased induced regulatory T (iTreg) cell stability and suppressive function (By similarity). Promotes ability of mesenchymal stromal cells to suppress T-cell proliferation (PubMed:23817958). Expands regulatory T-cells and induces cytotoxic T-cell apoptosis following virus infection (PubMed:20209097). Activates ERK1/2 phosphorylation inducing cytokine (IL-6, IL-8, IL-12) and chemokine (CCL2) production in mast and dendritic cells (PubMed:16116184, PubMed:24465902). Inhibits degranulation and induces apoptosis of mast cells (PubMed:24465902). Induces maturation and migration of dendritic cells (PubMed:16116184, PubMed:25754930). Inhibits natural killer (NK) cell function (PubMed:23408620). Can transform NK cell phenotype from peripheral to decidual during pregnancy (PubMed:25578313). Astrocyte derived galectin-9 enhances microglial TNF production (By similarity). May play a role in thymocyte-epithelial interactions relevant to the biology of the thymus. May provide the molecular basis for urate flux across cell membranes, allowing urate that is formed during purine metabolism to efflux from cells and serving as an electrogenic transporter that plays an important role in renal and gastrointestinal urate excretion (By similarity). Highly selective to the anion urate (By similarity).</text>
</comment>
<comment type="function">
    <molecule>Isoform 2</molecule>
    <text evidence="2 14 19">Acts as an eosinophil chemoattractant (PubMed:9642261). It also inhibits angiogenesis (PubMed:24333696). Suppresses IFNG production by natural killer cells (By similarity).</text>
</comment>
<comment type="subunit">
    <text evidence="29 30">Monomer.</text>
</comment>
<comment type="interaction">
    <interactant intactId="EBI-12130578">
        <id>O00182-2</id>
    </interactant>
    <interactant intactId="EBI-724310">
        <id>Q15038</id>
        <label>DAZAP2</label>
    </interactant>
    <organismsDiffer>false</organismsDiffer>
    <experiments>3</experiments>
</comment>
<comment type="interaction">
    <interactant intactId="EBI-12130578">
        <id>O00182-2</id>
    </interactant>
    <interactant intactId="EBI-22311199">
        <id>Q3LI67</id>
        <label>KRTAP6-3</label>
    </interactant>
    <organismsDiffer>false</organismsDiffer>
    <experiments>3</experiments>
</comment>
<comment type="subcellular location">
    <subcellularLocation>
        <location evidence="11">Cytoplasm</location>
    </subcellularLocation>
    <subcellularLocation>
        <location evidence="11">Nucleus</location>
    </subcellularLocation>
    <subcellularLocation>
        <location evidence="13 17">Secreted</location>
    </subcellularLocation>
    <text evidence="2 13">May also be secreted by a non-classical secretory pathway (By similarity). Secreted by mesenchymal stromal cells upon IFNG stimulation (PubMed:23817958).</text>
</comment>
<comment type="subcellular location">
    <molecule>Isoform 2</molecule>
    <subcellularLocation>
        <location evidence="14">Secreted</location>
    </subcellularLocation>
</comment>
<comment type="subcellular location">
    <molecule>Isoform 3</molecule>
    <subcellularLocation>
        <location evidence="14">Secreted</location>
    </subcellularLocation>
</comment>
<comment type="alternative products">
    <event type="alternative splicing"/>
    <isoform>
        <id>O00182-1</id>
        <name>1</name>
        <name>Long</name>
        <name evidence="23">Gal-9FL</name>
        <sequence type="displayed"/>
    </isoform>
    <isoform>
        <id>O00182-2</id>
        <name>2</name>
        <name>Medium</name>
        <name evidence="23">Gal-9delta5</name>
        <name evidence="22">D5</name>
        <sequence type="described" ref="VSP_003096"/>
    </isoform>
    <isoform>
        <id>O00182-3</id>
        <name>3</name>
        <name>Short</name>
        <name evidence="23">Gal-9delta5/6</name>
        <name evidence="22">D5/6</name>
        <sequence type="described" ref="VSP_003096 VSP_057842"/>
    </isoform>
    <isoform>
        <id>O00182-4</id>
        <name>4</name>
        <name evidence="23">Gal-9delta5/10</name>
        <name evidence="22">D5/10</name>
        <sequence type="described" ref="VSP_003096 VSP_057843"/>
    </isoform>
    <isoform>
        <id>O00182-5</id>
        <name>5</name>
        <name evidence="23">Gal-9delta5/6/10</name>
        <name evidence="22">D5/6/10</name>
        <sequence type="described" ref="VSP_003096 VSP_057842 VSP_057843"/>
    </isoform>
    <isoform>
        <id>O00182-6</id>
        <name>6</name>
        <name evidence="22">D6</name>
        <sequence type="described" ref="VSP_057842"/>
    </isoform>
</comment>
<comment type="tissue specificity">
    <text evidence="11 14 17">Peripheral blood leukocytes and lymphatic tissues. Expressed in lung, liver, breast and kidney with higher levels in tumor endothelial cells than normal endothelium (at protein level) (PubMed:24333696). Expressed in trophoblast cells in decidua and placenta in pregnancy (at protein level) (PubMed:23242525, PubMed:25578313). Isoform 2 is the most abundant isoform expressed in endothelial cells (PubMed:24333696). Upon endothelial cell activation isoform 2 expression decreases while expression of isoform 3 and isoform 5 increases (PubMed:24333696). Isoform 4 decreases in pathological pregnancy (PubMed:23242525).</text>
</comment>
<comment type="induction">
    <text evidence="9 13 16 18">By toll-like receptor ligands zymosan (TLR2 ligand), polyinosinic:polycytidylic acid (poly I:C) (TLR3 ligand) and lipopolysaccharides (LPS) (TLR4 ligand) and by pro-inflammatory cytokines IFNG, TNFA, IL1A and IL1B in mesenchymal stromal cells (PubMed:23817958). By IFNG in macrophages (PubMed:20209097). Up-regulated in dendritic cells following infection with dengue virus (PubMed:25754930). Up-regulated in Kupffer cells following infection with hepatitis C virus (PubMed:20209097). Up-regulated in plasma following infection with HIV-1 (PubMed:24786365).</text>
</comment>
<comment type="domain">
    <text>Contains two homologous but distinct carbohydrate-binding domains.</text>
</comment>
<comment type="online information" name="Functional Glycomics Gateway - Glycan Binding">
    <link uri="http://www.functionalglycomics.org/glycomics/GBPServlet?&amp;operationType=view&amp;cbpId=cbp_hum_Stlect_00120"/>
    <text>Galectin-9</text>
</comment>
<protein>
    <recommendedName>
        <fullName>Galectin-9</fullName>
        <shortName>Gal-9</shortName>
    </recommendedName>
    <alternativeName>
        <fullName>Ecalectin</fullName>
    </alternativeName>
    <alternativeName>
        <fullName>Tumor antigen HOM-HD-21</fullName>
    </alternativeName>
</protein>